<keyword id="KW-0067">ATP-binding</keyword>
<keyword id="KW-0317">Glutathione biosynthesis</keyword>
<keyword id="KW-0436">Ligase</keyword>
<keyword id="KW-0460">Magnesium</keyword>
<keyword id="KW-0464">Manganese</keyword>
<keyword id="KW-0479">Metal-binding</keyword>
<keyword id="KW-0547">Nucleotide-binding</keyword>
<reference key="1">
    <citation type="submission" date="2002-12" db="EMBL/GenBank/DDBJ databases">
        <title>Complete genome sequence of Vibrio vulnificus CMCP6.</title>
        <authorList>
            <person name="Rhee J.H."/>
            <person name="Kim S.Y."/>
            <person name="Chung S.S."/>
            <person name="Kim J.J."/>
            <person name="Moon Y.H."/>
            <person name="Jeong H."/>
            <person name="Choy H.E."/>
        </authorList>
    </citation>
    <scope>NUCLEOTIDE SEQUENCE [LARGE SCALE GENOMIC DNA]</scope>
    <source>
        <strain>CMCP6</strain>
    </source>
</reference>
<name>GSHB_VIBVU</name>
<feature type="chain" id="PRO_0000197493" description="Glutathione synthetase">
    <location>
        <begin position="1"/>
        <end position="317"/>
    </location>
</feature>
<feature type="domain" description="ATP-grasp" evidence="2">
    <location>
        <begin position="124"/>
        <end position="310"/>
    </location>
</feature>
<feature type="binding site" evidence="2">
    <location>
        <begin position="150"/>
        <end position="207"/>
    </location>
    <ligand>
        <name>ATP</name>
        <dbReference type="ChEBI" id="CHEBI:30616"/>
    </ligand>
</feature>
<feature type="binding site" evidence="2">
    <location>
        <position position="281"/>
    </location>
    <ligand>
        <name>Mg(2+)</name>
        <dbReference type="ChEBI" id="CHEBI:18420"/>
    </ligand>
</feature>
<feature type="binding site" evidence="2">
    <location>
        <position position="283"/>
    </location>
    <ligand>
        <name>Mg(2+)</name>
        <dbReference type="ChEBI" id="CHEBI:18420"/>
    </ligand>
</feature>
<proteinExistence type="inferred from homology"/>
<gene>
    <name evidence="2" type="primary">gshB</name>
    <name type="ordered locus">VV1_1530</name>
</gene>
<protein>
    <recommendedName>
        <fullName evidence="2">Glutathione synthetase</fullName>
        <ecNumber evidence="2">6.3.2.3</ecNumber>
    </recommendedName>
    <alternativeName>
        <fullName evidence="2">GSH synthetase</fullName>
        <shortName evidence="2">GSH-S</shortName>
        <shortName evidence="2">GSHase</shortName>
    </alternativeName>
    <alternativeName>
        <fullName evidence="2">Glutathione synthase</fullName>
    </alternativeName>
</protein>
<dbReference type="EC" id="6.3.2.3" evidence="2"/>
<dbReference type="EMBL" id="AE016795">
    <property type="protein sequence ID" value="AAO09956.1"/>
    <property type="molecule type" value="Genomic_DNA"/>
</dbReference>
<dbReference type="RefSeq" id="WP_011079466.1">
    <property type="nucleotide sequence ID" value="NC_004459.3"/>
</dbReference>
<dbReference type="SMR" id="Q8DCA9"/>
<dbReference type="KEGG" id="vvu:VV1_1530"/>
<dbReference type="HOGENOM" id="CLU_068239_0_0_6"/>
<dbReference type="UniPathway" id="UPA00142">
    <property type="reaction ID" value="UER00210"/>
</dbReference>
<dbReference type="Proteomes" id="UP000002275">
    <property type="component" value="Chromosome 1"/>
</dbReference>
<dbReference type="GO" id="GO:0005737">
    <property type="term" value="C:cytoplasm"/>
    <property type="evidence" value="ECO:0007669"/>
    <property type="project" value="TreeGrafter"/>
</dbReference>
<dbReference type="GO" id="GO:0005524">
    <property type="term" value="F:ATP binding"/>
    <property type="evidence" value="ECO:0007669"/>
    <property type="project" value="UniProtKB-UniRule"/>
</dbReference>
<dbReference type="GO" id="GO:0004363">
    <property type="term" value="F:glutathione synthase activity"/>
    <property type="evidence" value="ECO:0007669"/>
    <property type="project" value="UniProtKB-UniRule"/>
</dbReference>
<dbReference type="GO" id="GO:0046872">
    <property type="term" value="F:metal ion binding"/>
    <property type="evidence" value="ECO:0007669"/>
    <property type="project" value="UniProtKB-KW"/>
</dbReference>
<dbReference type="FunFam" id="3.30.1490.20:FF:000009">
    <property type="entry name" value="Glutathione synthetase"/>
    <property type="match status" value="1"/>
</dbReference>
<dbReference type="FunFam" id="3.30.470.20:FF:000010">
    <property type="entry name" value="Glutathione synthetase"/>
    <property type="match status" value="1"/>
</dbReference>
<dbReference type="FunFam" id="3.40.50.20:FF:000009">
    <property type="entry name" value="Glutathione synthetase"/>
    <property type="match status" value="1"/>
</dbReference>
<dbReference type="Gene3D" id="3.40.50.20">
    <property type="match status" value="1"/>
</dbReference>
<dbReference type="Gene3D" id="3.30.1490.20">
    <property type="entry name" value="ATP-grasp fold, A domain"/>
    <property type="match status" value="1"/>
</dbReference>
<dbReference type="Gene3D" id="3.30.470.20">
    <property type="entry name" value="ATP-grasp fold, B domain"/>
    <property type="match status" value="1"/>
</dbReference>
<dbReference type="HAMAP" id="MF_00162">
    <property type="entry name" value="GSH_S"/>
    <property type="match status" value="1"/>
</dbReference>
<dbReference type="InterPro" id="IPR011761">
    <property type="entry name" value="ATP-grasp"/>
</dbReference>
<dbReference type="InterPro" id="IPR013815">
    <property type="entry name" value="ATP_grasp_subdomain_1"/>
</dbReference>
<dbReference type="InterPro" id="IPR006284">
    <property type="entry name" value="Glut_synth_pro"/>
</dbReference>
<dbReference type="InterPro" id="IPR004218">
    <property type="entry name" value="GSHS_ATP-bd"/>
</dbReference>
<dbReference type="InterPro" id="IPR004215">
    <property type="entry name" value="GSHS_N"/>
</dbReference>
<dbReference type="InterPro" id="IPR016185">
    <property type="entry name" value="PreATP-grasp_dom_sf"/>
</dbReference>
<dbReference type="NCBIfam" id="TIGR01380">
    <property type="entry name" value="glut_syn"/>
    <property type="match status" value="1"/>
</dbReference>
<dbReference type="NCBIfam" id="NF003573">
    <property type="entry name" value="PRK05246.1"/>
    <property type="match status" value="1"/>
</dbReference>
<dbReference type="PANTHER" id="PTHR21621:SF4">
    <property type="entry name" value="GLUTATHIONE SYNTHETASE"/>
    <property type="match status" value="1"/>
</dbReference>
<dbReference type="PANTHER" id="PTHR21621">
    <property type="entry name" value="RIBOSOMAL PROTEIN S6 MODIFICATION PROTEIN"/>
    <property type="match status" value="1"/>
</dbReference>
<dbReference type="Pfam" id="PF02955">
    <property type="entry name" value="GSH-S_ATP"/>
    <property type="match status" value="1"/>
</dbReference>
<dbReference type="Pfam" id="PF02951">
    <property type="entry name" value="GSH-S_N"/>
    <property type="match status" value="1"/>
</dbReference>
<dbReference type="SUPFAM" id="SSF56059">
    <property type="entry name" value="Glutathione synthetase ATP-binding domain-like"/>
    <property type="match status" value="1"/>
</dbReference>
<dbReference type="SUPFAM" id="SSF52440">
    <property type="entry name" value="PreATP-grasp domain"/>
    <property type="match status" value="1"/>
</dbReference>
<dbReference type="PROSITE" id="PS50975">
    <property type="entry name" value="ATP_GRASP"/>
    <property type="match status" value="1"/>
</dbReference>
<sequence length="317" mass="35296">MIKLGIVMDPISSINIKKDSSFAMMLEAQRRGWEIHYMEMNDLHLDQGIAIADTKVVQLKEDPNGWYEFTSEQTIELAELDAVLMRKDPPFDTEYIYATYILERAEEQGTLIVNKPQSLRDCNEKLFTAWFPELTPTTIVTRKAEKIKAFRQEHGDIILKPLDGMGGASIFRVKENDPNVSVIIETLTNHGQNYAMAQTFVPDISNGDKRILVVDGEPMPYCLARIPAKGETRGNLAAGGSGEPRPLSETDLKIANAVAPTLKEKGLIFVGLDVIGDKLTEINVTSPTCIREIEAAFDISITGKLMDAIERRLQAQA</sequence>
<accession>Q8DCA9</accession>
<evidence type="ECO:0000250" key="1"/>
<evidence type="ECO:0000255" key="2">
    <source>
        <dbReference type="HAMAP-Rule" id="MF_00162"/>
    </source>
</evidence>
<organism>
    <name type="scientific">Vibrio vulnificus (strain CMCP6)</name>
    <dbReference type="NCBI Taxonomy" id="216895"/>
    <lineage>
        <taxon>Bacteria</taxon>
        <taxon>Pseudomonadati</taxon>
        <taxon>Pseudomonadota</taxon>
        <taxon>Gammaproteobacteria</taxon>
        <taxon>Vibrionales</taxon>
        <taxon>Vibrionaceae</taxon>
        <taxon>Vibrio</taxon>
    </lineage>
</organism>
<comment type="catalytic activity">
    <reaction evidence="2">
        <text>gamma-L-glutamyl-L-cysteine + glycine + ATP = glutathione + ADP + phosphate + H(+)</text>
        <dbReference type="Rhea" id="RHEA:13557"/>
        <dbReference type="ChEBI" id="CHEBI:15378"/>
        <dbReference type="ChEBI" id="CHEBI:30616"/>
        <dbReference type="ChEBI" id="CHEBI:43474"/>
        <dbReference type="ChEBI" id="CHEBI:57305"/>
        <dbReference type="ChEBI" id="CHEBI:57925"/>
        <dbReference type="ChEBI" id="CHEBI:58173"/>
        <dbReference type="ChEBI" id="CHEBI:456216"/>
        <dbReference type="EC" id="6.3.2.3"/>
    </reaction>
</comment>
<comment type="cofactor">
    <cofactor evidence="1">
        <name>Mg(2+)</name>
        <dbReference type="ChEBI" id="CHEBI:18420"/>
    </cofactor>
    <cofactor evidence="1">
        <name>Mn(2+)</name>
        <dbReference type="ChEBI" id="CHEBI:29035"/>
    </cofactor>
    <text evidence="1">Binds 1 Mg(2+) or Mn(2+) ion per subunit.</text>
</comment>
<comment type="pathway">
    <text evidence="2">Sulfur metabolism; glutathione biosynthesis; glutathione from L-cysteine and L-glutamate: step 2/2.</text>
</comment>
<comment type="similarity">
    <text evidence="2">Belongs to the prokaryotic GSH synthase family.</text>
</comment>